<feature type="chain" id="PRO_0000292715" description="tRNA 2-selenouridine synthase">
    <location>
        <begin position="1"/>
        <end position="369"/>
    </location>
</feature>
<feature type="domain" description="Rhodanese" evidence="1">
    <location>
        <begin position="15"/>
        <end position="138"/>
    </location>
</feature>
<feature type="active site" description="S-selanylcysteine intermediate" evidence="1">
    <location>
        <position position="98"/>
    </location>
</feature>
<keyword id="KW-0711">Selenium</keyword>
<keyword id="KW-0808">Transferase</keyword>
<dbReference type="EC" id="2.9.1.3" evidence="1"/>
<dbReference type="EMBL" id="CP000503">
    <property type="protein sequence ID" value="ABM26490.1"/>
    <property type="molecule type" value="Genomic_DNA"/>
</dbReference>
<dbReference type="SMR" id="A1RP95"/>
<dbReference type="KEGG" id="shw:Sputw3181_3681"/>
<dbReference type="HOGENOM" id="CLU_043456_1_0_6"/>
<dbReference type="Proteomes" id="UP000002597">
    <property type="component" value="Chromosome"/>
</dbReference>
<dbReference type="GO" id="GO:0016765">
    <property type="term" value="F:transferase activity, transferring alkyl or aryl (other than methyl) groups"/>
    <property type="evidence" value="ECO:0007669"/>
    <property type="project" value="UniProtKB-UniRule"/>
</dbReference>
<dbReference type="GO" id="GO:0043828">
    <property type="term" value="F:tRNA 2-selenouridine synthase activity"/>
    <property type="evidence" value="ECO:0007669"/>
    <property type="project" value="UniProtKB-EC"/>
</dbReference>
<dbReference type="GO" id="GO:0002098">
    <property type="term" value="P:tRNA wobble uridine modification"/>
    <property type="evidence" value="ECO:0007669"/>
    <property type="project" value="UniProtKB-UniRule"/>
</dbReference>
<dbReference type="Gene3D" id="3.40.250.10">
    <property type="entry name" value="Rhodanese-like domain"/>
    <property type="match status" value="1"/>
</dbReference>
<dbReference type="HAMAP" id="MF_01622">
    <property type="entry name" value="tRNA_sel_U_synth"/>
    <property type="match status" value="1"/>
</dbReference>
<dbReference type="InterPro" id="IPR001763">
    <property type="entry name" value="Rhodanese-like_dom"/>
</dbReference>
<dbReference type="InterPro" id="IPR036873">
    <property type="entry name" value="Rhodanese-like_dom_sf"/>
</dbReference>
<dbReference type="InterPro" id="IPR017582">
    <property type="entry name" value="SelU"/>
</dbReference>
<dbReference type="NCBIfam" id="NF008750">
    <property type="entry name" value="PRK11784.1-2"/>
    <property type="match status" value="1"/>
</dbReference>
<dbReference type="NCBIfam" id="NF008751">
    <property type="entry name" value="PRK11784.1-3"/>
    <property type="match status" value="1"/>
</dbReference>
<dbReference type="NCBIfam" id="TIGR03167">
    <property type="entry name" value="tRNA_sel_U_synt"/>
    <property type="match status" value="1"/>
</dbReference>
<dbReference type="PANTHER" id="PTHR30401">
    <property type="entry name" value="TRNA 2-SELENOURIDINE SYNTHASE"/>
    <property type="match status" value="1"/>
</dbReference>
<dbReference type="PANTHER" id="PTHR30401:SF0">
    <property type="entry name" value="TRNA 2-SELENOURIDINE SYNTHASE"/>
    <property type="match status" value="1"/>
</dbReference>
<dbReference type="SMART" id="SM00450">
    <property type="entry name" value="RHOD"/>
    <property type="match status" value="1"/>
</dbReference>
<dbReference type="SUPFAM" id="SSF52821">
    <property type="entry name" value="Rhodanese/Cell cycle control phosphatase"/>
    <property type="match status" value="1"/>
</dbReference>
<dbReference type="PROSITE" id="PS50206">
    <property type="entry name" value="RHODANESE_3"/>
    <property type="match status" value="1"/>
</dbReference>
<comment type="function">
    <text evidence="1">Involved in the post-transcriptional modification of the uridine at the wobble position (U34) of tRNA(Lys), tRNA(Glu) and tRNA(Gln). Catalyzes the conversion of 2-thiouridine (S2U-RNA) to 2-selenouridine (Se2U-RNA). Acts in a two-step process involving geranylation of 2-thiouridine (S2U) to S-geranyl-2-thiouridine (geS2U) and subsequent selenation of the latter derivative to 2-selenouridine (Se2U) in the tRNA chain.</text>
</comment>
<comment type="catalytic activity">
    <reaction evidence="1">
        <text>5-methylaminomethyl-2-thiouridine(34) in tRNA + selenophosphate + (2E)-geranyl diphosphate + H2O + H(+) = 5-methylaminomethyl-2-selenouridine(34) in tRNA + (2E)-thiogeraniol + phosphate + diphosphate</text>
        <dbReference type="Rhea" id="RHEA:42716"/>
        <dbReference type="Rhea" id="RHEA-COMP:10195"/>
        <dbReference type="Rhea" id="RHEA-COMP:10196"/>
        <dbReference type="ChEBI" id="CHEBI:15377"/>
        <dbReference type="ChEBI" id="CHEBI:15378"/>
        <dbReference type="ChEBI" id="CHEBI:16144"/>
        <dbReference type="ChEBI" id="CHEBI:33019"/>
        <dbReference type="ChEBI" id="CHEBI:43474"/>
        <dbReference type="ChEBI" id="CHEBI:58057"/>
        <dbReference type="ChEBI" id="CHEBI:74455"/>
        <dbReference type="ChEBI" id="CHEBI:82743"/>
        <dbReference type="ChEBI" id="CHEBI:143703"/>
        <dbReference type="EC" id="2.9.1.3"/>
    </reaction>
    <physiologicalReaction direction="left-to-right" evidence="1">
        <dbReference type="Rhea" id="RHEA:42717"/>
    </physiologicalReaction>
</comment>
<comment type="catalytic activity">
    <reaction evidence="1">
        <text>5-methylaminomethyl-2-thiouridine(34) in tRNA + (2E)-geranyl diphosphate = 5-methylaminomethyl-S-(2E)-geranyl-thiouridine(34) in tRNA + diphosphate</text>
        <dbReference type="Rhea" id="RHEA:14085"/>
        <dbReference type="Rhea" id="RHEA-COMP:10195"/>
        <dbReference type="Rhea" id="RHEA-COMP:14654"/>
        <dbReference type="ChEBI" id="CHEBI:33019"/>
        <dbReference type="ChEBI" id="CHEBI:58057"/>
        <dbReference type="ChEBI" id="CHEBI:74455"/>
        <dbReference type="ChEBI" id="CHEBI:140632"/>
    </reaction>
    <physiologicalReaction direction="left-to-right" evidence="1">
        <dbReference type="Rhea" id="RHEA:14086"/>
    </physiologicalReaction>
</comment>
<comment type="catalytic activity">
    <reaction evidence="1">
        <text>5-methylaminomethyl-S-(2E)-geranyl-thiouridine(34) in tRNA + selenophosphate + H(+) = 5-methylaminomethyl-2-(Se-phospho)selenouridine(34) in tRNA + (2E)-thiogeraniol</text>
        <dbReference type="Rhea" id="RHEA:60172"/>
        <dbReference type="Rhea" id="RHEA-COMP:14654"/>
        <dbReference type="Rhea" id="RHEA-COMP:15523"/>
        <dbReference type="ChEBI" id="CHEBI:15378"/>
        <dbReference type="ChEBI" id="CHEBI:16144"/>
        <dbReference type="ChEBI" id="CHEBI:140632"/>
        <dbReference type="ChEBI" id="CHEBI:143702"/>
        <dbReference type="ChEBI" id="CHEBI:143703"/>
    </reaction>
    <physiologicalReaction direction="left-to-right" evidence="1">
        <dbReference type="Rhea" id="RHEA:60173"/>
    </physiologicalReaction>
</comment>
<comment type="catalytic activity">
    <reaction evidence="1">
        <text>5-methylaminomethyl-2-(Se-phospho)selenouridine(34) in tRNA + H2O = 5-methylaminomethyl-2-selenouridine(34) in tRNA + phosphate</text>
        <dbReference type="Rhea" id="RHEA:60176"/>
        <dbReference type="Rhea" id="RHEA-COMP:10196"/>
        <dbReference type="Rhea" id="RHEA-COMP:15523"/>
        <dbReference type="ChEBI" id="CHEBI:15377"/>
        <dbReference type="ChEBI" id="CHEBI:43474"/>
        <dbReference type="ChEBI" id="CHEBI:82743"/>
        <dbReference type="ChEBI" id="CHEBI:143702"/>
    </reaction>
    <physiologicalReaction direction="left-to-right" evidence="1">
        <dbReference type="Rhea" id="RHEA:60177"/>
    </physiologicalReaction>
</comment>
<comment type="subunit">
    <text evidence="1">Monomer.</text>
</comment>
<comment type="similarity">
    <text evidence="1">Belongs to the SelU family.</text>
</comment>
<name>SELU_SHESW</name>
<evidence type="ECO:0000255" key="1">
    <source>
        <dbReference type="HAMAP-Rule" id="MF_01622"/>
    </source>
</evidence>
<proteinExistence type="inferred from homology"/>
<gene>
    <name evidence="1" type="primary">selU</name>
    <name type="ordered locus">Sputw3181_3681</name>
</gene>
<sequence length="369" mass="42144">MPSAIVAAEQYREIFLNQHPMMDVRAPIEFTRGAFPNSTNLPLMLDSEREKVGTCYKQFGQQAAIALGHSLVNGPIKQQRIEAWASYVKANPNAYLYCFRGGLRSQLTQQWLKEAGIEVPYIQGGYKAMRQYLIGVIEAAPTQQPLLSLSGMTGCGKTDFLLQRKEAVDLEGIANHRGSSFGKNIDPQPTQINFENQLAIALLRHQQDNHSCLLLEDESFLIGRSALPQSFYSAMQAAEILVLEEPDDTRLKRLRNEYVHKMYSGFCERLGLEAGFAAFSEYLLQSLMSIRKRLGGKQHQELQDLMQQALNQQISQNDTSLHLVWIHLLLHKYYDPMYQYQLQKKSERVLFKGSHQAMHEWLNNFKSTQ</sequence>
<organism>
    <name type="scientific">Shewanella sp. (strain W3-18-1)</name>
    <dbReference type="NCBI Taxonomy" id="351745"/>
    <lineage>
        <taxon>Bacteria</taxon>
        <taxon>Pseudomonadati</taxon>
        <taxon>Pseudomonadota</taxon>
        <taxon>Gammaproteobacteria</taxon>
        <taxon>Alteromonadales</taxon>
        <taxon>Shewanellaceae</taxon>
        <taxon>Shewanella</taxon>
    </lineage>
</organism>
<reference key="1">
    <citation type="submission" date="2006-12" db="EMBL/GenBank/DDBJ databases">
        <title>Complete sequence of Shewanella sp. W3-18-1.</title>
        <authorList>
            <consortium name="US DOE Joint Genome Institute"/>
            <person name="Copeland A."/>
            <person name="Lucas S."/>
            <person name="Lapidus A."/>
            <person name="Barry K."/>
            <person name="Detter J.C."/>
            <person name="Glavina del Rio T."/>
            <person name="Hammon N."/>
            <person name="Israni S."/>
            <person name="Dalin E."/>
            <person name="Tice H."/>
            <person name="Pitluck S."/>
            <person name="Chain P."/>
            <person name="Malfatti S."/>
            <person name="Shin M."/>
            <person name="Vergez L."/>
            <person name="Schmutz J."/>
            <person name="Larimer F."/>
            <person name="Land M."/>
            <person name="Hauser L."/>
            <person name="Kyrpides N."/>
            <person name="Lykidis A."/>
            <person name="Tiedje J."/>
            <person name="Richardson P."/>
        </authorList>
    </citation>
    <scope>NUCLEOTIDE SEQUENCE [LARGE SCALE GENOMIC DNA]</scope>
    <source>
        <strain>W3-18-1</strain>
    </source>
</reference>
<protein>
    <recommendedName>
        <fullName evidence="1">tRNA 2-selenouridine synthase</fullName>
        <ecNumber evidence="1">2.9.1.3</ecNumber>
    </recommendedName>
</protein>
<accession>A1RP95</accession>